<feature type="chain" id="PRO_0000394003" description="Enolase-phosphatase E1">
    <location>
        <begin position="1"/>
        <end position="231"/>
    </location>
</feature>
<feature type="binding site" evidence="1">
    <location>
        <position position="11"/>
    </location>
    <ligand>
        <name>Mg(2+)</name>
        <dbReference type="ChEBI" id="CHEBI:18420"/>
    </ligand>
</feature>
<feature type="binding site" evidence="1">
    <location>
        <position position="13"/>
    </location>
    <ligand>
        <name>Mg(2+)</name>
        <dbReference type="ChEBI" id="CHEBI:18420"/>
    </ligand>
</feature>
<feature type="binding site" evidence="1">
    <location>
        <begin position="125"/>
        <end position="126"/>
    </location>
    <ligand>
        <name>substrate</name>
    </ligand>
</feature>
<feature type="binding site" evidence="1">
    <location>
        <position position="162"/>
    </location>
    <ligand>
        <name>substrate</name>
    </ligand>
</feature>
<feature type="binding site" evidence="1">
    <location>
        <position position="188"/>
    </location>
    <ligand>
        <name>Mg(2+)</name>
        <dbReference type="ChEBI" id="CHEBI:18420"/>
    </ligand>
</feature>
<sequence>MASAVKVFLLDIEGTVCPISFVKDVLFPYALEALPHTLDSQWDDPAFAQYRDAFPAEYASSKEALAAHVRDLVSRDVKAPYLKSLQGYLWKNGYDSGEIRAPLFADVAPKFAAWQAAGIAIMIYSSGSVPAQKLLFGHTNSEPADLTSAIADFFDTVNAGPKTEIASYEKIASMHPQYPKNEWLFLSDNVKEVDAALGAGFQSFVVQRPGNPELPDGVEDRHKVIRSFEEL</sequence>
<proteinExistence type="inferred from homology"/>
<keyword id="KW-0028">Amino-acid biosynthesis</keyword>
<keyword id="KW-0963">Cytoplasm</keyword>
<keyword id="KW-0378">Hydrolase</keyword>
<keyword id="KW-0460">Magnesium</keyword>
<keyword id="KW-0479">Metal-binding</keyword>
<keyword id="KW-0486">Methionine biosynthesis</keyword>
<keyword id="KW-0539">Nucleus</keyword>
<keyword id="KW-1185">Reference proteome</keyword>
<organism>
    <name type="scientific">Pyricularia oryzae (strain 70-15 / ATCC MYA-4617 / FGSC 8958)</name>
    <name type="common">Rice blast fungus</name>
    <name type="synonym">Magnaporthe oryzae</name>
    <dbReference type="NCBI Taxonomy" id="242507"/>
    <lineage>
        <taxon>Eukaryota</taxon>
        <taxon>Fungi</taxon>
        <taxon>Dikarya</taxon>
        <taxon>Ascomycota</taxon>
        <taxon>Pezizomycotina</taxon>
        <taxon>Sordariomycetes</taxon>
        <taxon>Sordariomycetidae</taxon>
        <taxon>Magnaporthales</taxon>
        <taxon>Pyriculariaceae</taxon>
        <taxon>Pyricularia</taxon>
    </lineage>
</organism>
<gene>
    <name evidence="1" type="primary">UTR4</name>
    <name type="ORF">MGG_10183</name>
</gene>
<evidence type="ECO:0000255" key="1">
    <source>
        <dbReference type="HAMAP-Rule" id="MF_03117"/>
    </source>
</evidence>
<name>ENOPH_PYRO7</name>
<accession>A4RM80</accession>
<accession>G4MUN1</accession>
<reference key="1">
    <citation type="journal article" date="2005" name="Nature">
        <title>The genome sequence of the rice blast fungus Magnaporthe grisea.</title>
        <authorList>
            <person name="Dean R.A."/>
            <person name="Talbot N.J."/>
            <person name="Ebbole D.J."/>
            <person name="Farman M.L."/>
            <person name="Mitchell T.K."/>
            <person name="Orbach M.J."/>
            <person name="Thon M.R."/>
            <person name="Kulkarni R."/>
            <person name="Xu J.-R."/>
            <person name="Pan H."/>
            <person name="Read N.D."/>
            <person name="Lee Y.-H."/>
            <person name="Carbone I."/>
            <person name="Brown D."/>
            <person name="Oh Y.Y."/>
            <person name="Donofrio N."/>
            <person name="Jeong J.S."/>
            <person name="Soanes D.M."/>
            <person name="Djonovic S."/>
            <person name="Kolomiets E."/>
            <person name="Rehmeyer C."/>
            <person name="Li W."/>
            <person name="Harding M."/>
            <person name="Kim S."/>
            <person name="Lebrun M.-H."/>
            <person name="Bohnert H."/>
            <person name="Coughlan S."/>
            <person name="Butler J."/>
            <person name="Calvo S.E."/>
            <person name="Ma L.-J."/>
            <person name="Nicol R."/>
            <person name="Purcell S."/>
            <person name="Nusbaum C."/>
            <person name="Galagan J.E."/>
            <person name="Birren B.W."/>
        </authorList>
    </citation>
    <scope>NUCLEOTIDE SEQUENCE [LARGE SCALE GENOMIC DNA]</scope>
    <source>
        <strain>70-15 / ATCC MYA-4617 / FGSC 8958</strain>
    </source>
</reference>
<dbReference type="EC" id="3.1.3.77" evidence="1"/>
<dbReference type="EMBL" id="CM001232">
    <property type="protein sequence ID" value="EHA54005.1"/>
    <property type="molecule type" value="Genomic_DNA"/>
</dbReference>
<dbReference type="RefSeq" id="XP_003713812.1">
    <property type="nucleotide sequence ID" value="XM_003713764.1"/>
</dbReference>
<dbReference type="SMR" id="A4RM80"/>
<dbReference type="FunCoup" id="A4RM80">
    <property type="interactions" value="633"/>
</dbReference>
<dbReference type="STRING" id="242507.A4RM80"/>
<dbReference type="EnsemblFungi" id="MGG_10183T0">
    <property type="protein sequence ID" value="MGG_10183T0"/>
    <property type="gene ID" value="MGG_10183"/>
</dbReference>
<dbReference type="GeneID" id="2681810"/>
<dbReference type="KEGG" id="mgr:MGG_10183"/>
<dbReference type="VEuPathDB" id="FungiDB:MGG_10183"/>
<dbReference type="eggNOG" id="KOG2630">
    <property type="taxonomic scope" value="Eukaryota"/>
</dbReference>
<dbReference type="HOGENOM" id="CLU_023273_1_1_1"/>
<dbReference type="InParanoid" id="A4RM80"/>
<dbReference type="OMA" id="LQGMVWE"/>
<dbReference type="OrthoDB" id="5954793at2759"/>
<dbReference type="UniPathway" id="UPA00904">
    <property type="reaction ID" value="UER00876"/>
</dbReference>
<dbReference type="UniPathway" id="UPA00904">
    <property type="reaction ID" value="UER00877"/>
</dbReference>
<dbReference type="Proteomes" id="UP000009058">
    <property type="component" value="Chromosome 2"/>
</dbReference>
<dbReference type="GO" id="GO:0005737">
    <property type="term" value="C:cytoplasm"/>
    <property type="evidence" value="ECO:0007669"/>
    <property type="project" value="UniProtKB-SubCell"/>
</dbReference>
<dbReference type="GO" id="GO:0005634">
    <property type="term" value="C:nucleus"/>
    <property type="evidence" value="ECO:0007669"/>
    <property type="project" value="UniProtKB-SubCell"/>
</dbReference>
<dbReference type="GO" id="GO:0043874">
    <property type="term" value="F:acireductone synthase activity"/>
    <property type="evidence" value="ECO:0007669"/>
    <property type="project" value="UniProtKB-EC"/>
</dbReference>
<dbReference type="GO" id="GO:0000287">
    <property type="term" value="F:magnesium ion binding"/>
    <property type="evidence" value="ECO:0007669"/>
    <property type="project" value="UniProtKB-UniRule"/>
</dbReference>
<dbReference type="GO" id="GO:0019509">
    <property type="term" value="P:L-methionine salvage from methylthioadenosine"/>
    <property type="evidence" value="ECO:0007669"/>
    <property type="project" value="UniProtKB-UniRule"/>
</dbReference>
<dbReference type="CDD" id="cd01629">
    <property type="entry name" value="HAD_EP"/>
    <property type="match status" value="1"/>
</dbReference>
<dbReference type="FunFam" id="1.10.720.60:FF:000007">
    <property type="entry name" value="Enolase-phosphatase E1"/>
    <property type="match status" value="1"/>
</dbReference>
<dbReference type="Gene3D" id="1.10.720.60">
    <property type="match status" value="1"/>
</dbReference>
<dbReference type="Gene3D" id="3.40.50.1000">
    <property type="entry name" value="HAD superfamily/HAD-like"/>
    <property type="match status" value="1"/>
</dbReference>
<dbReference type="HAMAP" id="MF_03117">
    <property type="entry name" value="Salvage_MtnC_euk"/>
    <property type="match status" value="1"/>
</dbReference>
<dbReference type="InterPro" id="IPR023943">
    <property type="entry name" value="Enolase-ppase_E1"/>
</dbReference>
<dbReference type="InterPro" id="IPR027511">
    <property type="entry name" value="ENOPH1_eukaryotes"/>
</dbReference>
<dbReference type="InterPro" id="IPR036412">
    <property type="entry name" value="HAD-like_sf"/>
</dbReference>
<dbReference type="InterPro" id="IPR023214">
    <property type="entry name" value="HAD_sf"/>
</dbReference>
<dbReference type="NCBIfam" id="TIGR01691">
    <property type="entry name" value="enolase-ppase"/>
    <property type="match status" value="1"/>
</dbReference>
<dbReference type="PANTHER" id="PTHR20371">
    <property type="entry name" value="ENOLASE-PHOSPHATASE E1"/>
    <property type="match status" value="1"/>
</dbReference>
<dbReference type="PANTHER" id="PTHR20371:SF1">
    <property type="entry name" value="ENOLASE-PHOSPHATASE E1"/>
    <property type="match status" value="1"/>
</dbReference>
<dbReference type="SFLD" id="SFLDG01133">
    <property type="entry name" value="C1.5.4:_Enolase-phosphatase_Li"/>
    <property type="match status" value="1"/>
</dbReference>
<dbReference type="SFLD" id="SFLDG01129">
    <property type="entry name" value="C1.5:_HAD__Beta-PGM__Phosphata"/>
    <property type="match status" value="1"/>
</dbReference>
<dbReference type="SUPFAM" id="SSF56784">
    <property type="entry name" value="HAD-like"/>
    <property type="match status" value="1"/>
</dbReference>
<protein>
    <recommendedName>
        <fullName evidence="1">Enolase-phosphatase E1</fullName>
        <ecNumber evidence="1">3.1.3.77</ecNumber>
    </recommendedName>
    <alternativeName>
        <fullName evidence="1">2,3-diketo-5-methylthio-1-phosphopentane phosphatase</fullName>
    </alternativeName>
</protein>
<comment type="function">
    <text evidence="1">Bifunctional enzyme that catalyzes the enolization of 2,3-diketo-5-methylthiopentyl-1-phosphate (DK-MTP-1-P) into the intermediate 2-hydroxy-3-keto-5-methylthiopentenyl-1-phosphate (HK-MTPenyl-1-P), which is then dephosphorylated to form the acireductone 1,2-dihydroxy-3-keto-5-methylthiopentene (DHK-MTPene).</text>
</comment>
<comment type="catalytic activity">
    <reaction evidence="1">
        <text>5-methylsulfanyl-2,3-dioxopentyl phosphate + H2O = 1,2-dihydroxy-5-(methylsulfanyl)pent-1-en-3-one + phosphate</text>
        <dbReference type="Rhea" id="RHEA:21700"/>
        <dbReference type="ChEBI" id="CHEBI:15377"/>
        <dbReference type="ChEBI" id="CHEBI:43474"/>
        <dbReference type="ChEBI" id="CHEBI:49252"/>
        <dbReference type="ChEBI" id="CHEBI:58828"/>
        <dbReference type="EC" id="3.1.3.77"/>
    </reaction>
</comment>
<comment type="cofactor">
    <cofactor evidence="1">
        <name>Mg(2+)</name>
        <dbReference type="ChEBI" id="CHEBI:18420"/>
    </cofactor>
    <text evidence="1">Binds 1 Mg(2+) ion per subunit.</text>
</comment>
<comment type="pathway">
    <text evidence="1">Amino-acid biosynthesis; L-methionine biosynthesis via salvage pathway; L-methionine from S-methyl-5-thio-alpha-D-ribose 1-phosphate: step 3/6.</text>
</comment>
<comment type="pathway">
    <text evidence="1">Amino-acid biosynthesis; L-methionine biosynthesis via salvage pathway; L-methionine from S-methyl-5-thio-alpha-D-ribose 1-phosphate: step 4/6.</text>
</comment>
<comment type="subunit">
    <text evidence="1">Monomer.</text>
</comment>
<comment type="subcellular location">
    <subcellularLocation>
        <location evidence="1">Cytoplasm</location>
    </subcellularLocation>
    <subcellularLocation>
        <location evidence="1">Nucleus</location>
    </subcellularLocation>
</comment>
<comment type="similarity">
    <text evidence="1">Belongs to the HAD-like hydrolase superfamily. MasA/MtnC family.</text>
</comment>